<name>RL3_STRPB</name>
<organism>
    <name type="scientific">Streptococcus pyogenes serotype M12 (strain MGAS2096)</name>
    <dbReference type="NCBI Taxonomy" id="370553"/>
    <lineage>
        <taxon>Bacteria</taxon>
        <taxon>Bacillati</taxon>
        <taxon>Bacillota</taxon>
        <taxon>Bacilli</taxon>
        <taxon>Lactobacillales</taxon>
        <taxon>Streptococcaceae</taxon>
        <taxon>Streptococcus</taxon>
    </lineage>
</organism>
<proteinExistence type="inferred from homology"/>
<comment type="function">
    <text evidence="1">One of the primary rRNA binding proteins, it binds directly near the 3'-end of the 23S rRNA, where it nucleates assembly of the 50S subunit.</text>
</comment>
<comment type="subunit">
    <text evidence="1">Part of the 50S ribosomal subunit. Forms a cluster with proteins L14 and L19.</text>
</comment>
<comment type="similarity">
    <text evidence="1">Belongs to the universal ribosomal protein uL3 family.</text>
</comment>
<feature type="chain" id="PRO_1000052151" description="Large ribosomal subunit protein uL3">
    <location>
        <begin position="1"/>
        <end position="208"/>
    </location>
</feature>
<feature type="region of interest" description="Disordered" evidence="2">
    <location>
        <begin position="116"/>
        <end position="148"/>
    </location>
</feature>
<evidence type="ECO:0000255" key="1">
    <source>
        <dbReference type="HAMAP-Rule" id="MF_01325"/>
    </source>
</evidence>
<evidence type="ECO:0000256" key="2">
    <source>
        <dbReference type="SAM" id="MobiDB-lite"/>
    </source>
</evidence>
<evidence type="ECO:0000305" key="3"/>
<sequence length="208" mass="22440">MTKGILGKKVGMTQIFTESGEFIPVTVIEATPNVVLQVKTVETDGYEAVQVGFDDKREVLSNKPAKGHVAKANTAPKRFIREFKNIEGLEVGAELSVEQFEAGDVVDVTGTSKGKGFQGVIKRHGQSRGPMAHGSRYHRRPGSMGPVAPNRVFKNKRLAGRMGGNRVTVQNLEIVQVIPEKNVILIKGNVPGAKKSLITIKSAVKAAK</sequence>
<reference key="1">
    <citation type="journal article" date="2006" name="Proc. Natl. Acad. Sci. U.S.A.">
        <title>Molecular genetic anatomy of inter- and intraserotype variation in the human bacterial pathogen group A Streptococcus.</title>
        <authorList>
            <person name="Beres S.B."/>
            <person name="Richter E.W."/>
            <person name="Nagiec M.J."/>
            <person name="Sumby P."/>
            <person name="Porcella S.F."/>
            <person name="DeLeo F.R."/>
            <person name="Musser J.M."/>
        </authorList>
    </citation>
    <scope>NUCLEOTIDE SEQUENCE [LARGE SCALE GENOMIC DNA]</scope>
    <source>
        <strain>MGAS2096</strain>
    </source>
</reference>
<protein>
    <recommendedName>
        <fullName evidence="1">Large ribosomal subunit protein uL3</fullName>
    </recommendedName>
    <alternativeName>
        <fullName evidence="3">50S ribosomal protein L3</fullName>
    </alternativeName>
</protein>
<gene>
    <name evidence="1" type="primary">rplC</name>
    <name type="ordered locus">MGAS2096_Spy0047</name>
</gene>
<keyword id="KW-0687">Ribonucleoprotein</keyword>
<keyword id="KW-0689">Ribosomal protein</keyword>
<keyword id="KW-0694">RNA-binding</keyword>
<keyword id="KW-0699">rRNA-binding</keyword>
<dbReference type="EMBL" id="CP000261">
    <property type="protein sequence ID" value="ABF35099.1"/>
    <property type="molecule type" value="Genomic_DNA"/>
</dbReference>
<dbReference type="SMR" id="Q1JE59"/>
<dbReference type="KEGG" id="spj:MGAS2096_Spy0047"/>
<dbReference type="HOGENOM" id="CLU_044142_4_1_9"/>
<dbReference type="GO" id="GO:0022625">
    <property type="term" value="C:cytosolic large ribosomal subunit"/>
    <property type="evidence" value="ECO:0007669"/>
    <property type="project" value="TreeGrafter"/>
</dbReference>
<dbReference type="GO" id="GO:0019843">
    <property type="term" value="F:rRNA binding"/>
    <property type="evidence" value="ECO:0007669"/>
    <property type="project" value="UniProtKB-UniRule"/>
</dbReference>
<dbReference type="GO" id="GO:0003735">
    <property type="term" value="F:structural constituent of ribosome"/>
    <property type="evidence" value="ECO:0007669"/>
    <property type="project" value="InterPro"/>
</dbReference>
<dbReference type="GO" id="GO:0006412">
    <property type="term" value="P:translation"/>
    <property type="evidence" value="ECO:0007669"/>
    <property type="project" value="UniProtKB-UniRule"/>
</dbReference>
<dbReference type="FunFam" id="2.40.30.10:FF:000004">
    <property type="entry name" value="50S ribosomal protein L3"/>
    <property type="match status" value="1"/>
</dbReference>
<dbReference type="FunFam" id="3.30.160.810:FF:000002">
    <property type="entry name" value="50S ribosomal protein L3"/>
    <property type="match status" value="1"/>
</dbReference>
<dbReference type="Gene3D" id="3.30.160.810">
    <property type="match status" value="1"/>
</dbReference>
<dbReference type="Gene3D" id="2.40.30.10">
    <property type="entry name" value="Translation factors"/>
    <property type="match status" value="1"/>
</dbReference>
<dbReference type="HAMAP" id="MF_01325_B">
    <property type="entry name" value="Ribosomal_uL3_B"/>
    <property type="match status" value="1"/>
</dbReference>
<dbReference type="InterPro" id="IPR000597">
    <property type="entry name" value="Ribosomal_uL3"/>
</dbReference>
<dbReference type="InterPro" id="IPR019927">
    <property type="entry name" value="Ribosomal_uL3_bac/org-type"/>
</dbReference>
<dbReference type="InterPro" id="IPR019926">
    <property type="entry name" value="Ribosomal_uL3_CS"/>
</dbReference>
<dbReference type="InterPro" id="IPR009000">
    <property type="entry name" value="Transl_B-barrel_sf"/>
</dbReference>
<dbReference type="NCBIfam" id="TIGR03625">
    <property type="entry name" value="L3_bact"/>
    <property type="match status" value="1"/>
</dbReference>
<dbReference type="PANTHER" id="PTHR11229">
    <property type="entry name" value="50S RIBOSOMAL PROTEIN L3"/>
    <property type="match status" value="1"/>
</dbReference>
<dbReference type="PANTHER" id="PTHR11229:SF16">
    <property type="entry name" value="LARGE RIBOSOMAL SUBUNIT PROTEIN UL3C"/>
    <property type="match status" value="1"/>
</dbReference>
<dbReference type="Pfam" id="PF00297">
    <property type="entry name" value="Ribosomal_L3"/>
    <property type="match status" value="1"/>
</dbReference>
<dbReference type="SUPFAM" id="SSF50447">
    <property type="entry name" value="Translation proteins"/>
    <property type="match status" value="1"/>
</dbReference>
<dbReference type="PROSITE" id="PS00474">
    <property type="entry name" value="RIBOSOMAL_L3"/>
    <property type="match status" value="1"/>
</dbReference>
<accession>Q1JE59</accession>